<dbReference type="EC" id="4.2.1.20" evidence="1"/>
<dbReference type="EMBL" id="CP000908">
    <property type="protein sequence ID" value="ABY32814.1"/>
    <property type="molecule type" value="Genomic_DNA"/>
</dbReference>
<dbReference type="RefSeq" id="WP_012255531.1">
    <property type="nucleotide sequence ID" value="NC_010172.1"/>
</dbReference>
<dbReference type="SMR" id="A9VWE9"/>
<dbReference type="KEGG" id="mex:Mext_4446"/>
<dbReference type="eggNOG" id="COG0159">
    <property type="taxonomic scope" value="Bacteria"/>
</dbReference>
<dbReference type="HOGENOM" id="CLU_016734_0_0_5"/>
<dbReference type="BioCyc" id="MEXT419610:MEXT_RS22345-MONOMER"/>
<dbReference type="UniPathway" id="UPA00035">
    <property type="reaction ID" value="UER00044"/>
</dbReference>
<dbReference type="GO" id="GO:0005829">
    <property type="term" value="C:cytosol"/>
    <property type="evidence" value="ECO:0007669"/>
    <property type="project" value="TreeGrafter"/>
</dbReference>
<dbReference type="GO" id="GO:0004834">
    <property type="term" value="F:tryptophan synthase activity"/>
    <property type="evidence" value="ECO:0007669"/>
    <property type="project" value="UniProtKB-UniRule"/>
</dbReference>
<dbReference type="CDD" id="cd04724">
    <property type="entry name" value="Tryptophan_synthase_alpha"/>
    <property type="match status" value="1"/>
</dbReference>
<dbReference type="FunFam" id="3.20.20.70:FF:000037">
    <property type="entry name" value="Tryptophan synthase alpha chain"/>
    <property type="match status" value="1"/>
</dbReference>
<dbReference type="Gene3D" id="3.20.20.70">
    <property type="entry name" value="Aldolase class I"/>
    <property type="match status" value="1"/>
</dbReference>
<dbReference type="HAMAP" id="MF_00131">
    <property type="entry name" value="Trp_synth_alpha"/>
    <property type="match status" value="1"/>
</dbReference>
<dbReference type="InterPro" id="IPR013785">
    <property type="entry name" value="Aldolase_TIM"/>
</dbReference>
<dbReference type="InterPro" id="IPR011060">
    <property type="entry name" value="RibuloseP-bd_barrel"/>
</dbReference>
<dbReference type="InterPro" id="IPR002028">
    <property type="entry name" value="Trp_synthase_suA"/>
</dbReference>
<dbReference type="NCBIfam" id="TIGR00262">
    <property type="entry name" value="trpA"/>
    <property type="match status" value="1"/>
</dbReference>
<dbReference type="PANTHER" id="PTHR43406:SF1">
    <property type="entry name" value="TRYPTOPHAN SYNTHASE ALPHA CHAIN, CHLOROPLASTIC"/>
    <property type="match status" value="1"/>
</dbReference>
<dbReference type="PANTHER" id="PTHR43406">
    <property type="entry name" value="TRYPTOPHAN SYNTHASE, ALPHA CHAIN"/>
    <property type="match status" value="1"/>
</dbReference>
<dbReference type="Pfam" id="PF00290">
    <property type="entry name" value="Trp_syntA"/>
    <property type="match status" value="1"/>
</dbReference>
<dbReference type="SUPFAM" id="SSF51366">
    <property type="entry name" value="Ribulose-phoshate binding barrel"/>
    <property type="match status" value="1"/>
</dbReference>
<feature type="chain" id="PRO_1000095727" description="Tryptophan synthase alpha chain">
    <location>
        <begin position="1"/>
        <end position="280"/>
    </location>
</feature>
<feature type="active site" description="Proton acceptor" evidence="1">
    <location>
        <position position="50"/>
    </location>
</feature>
<feature type="active site" description="Proton acceptor" evidence="1">
    <location>
        <position position="61"/>
    </location>
</feature>
<gene>
    <name evidence="1" type="primary">trpA</name>
    <name type="ordered locus">Mext_4446</name>
</gene>
<proteinExistence type="inferred from homology"/>
<accession>A9VWE9</accession>
<evidence type="ECO:0000255" key="1">
    <source>
        <dbReference type="HAMAP-Rule" id="MF_00131"/>
    </source>
</evidence>
<reference key="1">
    <citation type="submission" date="2007-12" db="EMBL/GenBank/DDBJ databases">
        <title>Complete sequence of Methylobacterium extorquens PA1.</title>
        <authorList>
            <consortium name="US DOE Joint Genome Institute"/>
            <person name="Copeland A."/>
            <person name="Lucas S."/>
            <person name="Lapidus A."/>
            <person name="Barry K."/>
            <person name="Glavina del Rio T."/>
            <person name="Dalin E."/>
            <person name="Tice H."/>
            <person name="Pitluck S."/>
            <person name="Saunders E."/>
            <person name="Brettin T."/>
            <person name="Bruce D."/>
            <person name="Detter J.C."/>
            <person name="Han C."/>
            <person name="Schmutz J."/>
            <person name="Larimer F."/>
            <person name="Land M."/>
            <person name="Hauser L."/>
            <person name="Kyrpides N."/>
            <person name="Kim E."/>
            <person name="Marx C."/>
            <person name="Richardson P."/>
        </authorList>
    </citation>
    <scope>NUCLEOTIDE SEQUENCE [LARGE SCALE GENOMIC DNA]</scope>
    <source>
        <strain>PA1</strain>
    </source>
</reference>
<name>TRPA_METEP</name>
<comment type="function">
    <text evidence="1">The alpha subunit is responsible for the aldol cleavage of indoleglycerol phosphate to indole and glyceraldehyde 3-phosphate.</text>
</comment>
<comment type="catalytic activity">
    <reaction evidence="1">
        <text>(1S,2R)-1-C-(indol-3-yl)glycerol 3-phosphate + L-serine = D-glyceraldehyde 3-phosphate + L-tryptophan + H2O</text>
        <dbReference type="Rhea" id="RHEA:10532"/>
        <dbReference type="ChEBI" id="CHEBI:15377"/>
        <dbReference type="ChEBI" id="CHEBI:33384"/>
        <dbReference type="ChEBI" id="CHEBI:57912"/>
        <dbReference type="ChEBI" id="CHEBI:58866"/>
        <dbReference type="ChEBI" id="CHEBI:59776"/>
        <dbReference type="EC" id="4.2.1.20"/>
    </reaction>
</comment>
<comment type="pathway">
    <text evidence="1">Amino-acid biosynthesis; L-tryptophan biosynthesis; L-tryptophan from chorismate: step 5/5.</text>
</comment>
<comment type="subunit">
    <text evidence="1">Tetramer of two alpha and two beta chains.</text>
</comment>
<comment type="similarity">
    <text evidence="1">Belongs to the TrpA family.</text>
</comment>
<keyword id="KW-0028">Amino-acid biosynthesis</keyword>
<keyword id="KW-0057">Aromatic amino acid biosynthesis</keyword>
<keyword id="KW-0456">Lyase</keyword>
<keyword id="KW-0822">Tryptophan biosynthesis</keyword>
<organism>
    <name type="scientific">Methylorubrum extorquens (strain PA1)</name>
    <name type="common">Methylobacterium extorquens</name>
    <dbReference type="NCBI Taxonomy" id="419610"/>
    <lineage>
        <taxon>Bacteria</taxon>
        <taxon>Pseudomonadati</taxon>
        <taxon>Pseudomonadota</taxon>
        <taxon>Alphaproteobacteria</taxon>
        <taxon>Hyphomicrobiales</taxon>
        <taxon>Methylobacteriaceae</taxon>
        <taxon>Methylorubrum</taxon>
    </lineage>
</organism>
<sequence length="280" mass="29000">MTARIDAAFARCRAEGRAALVTYVMAGDPDPETSLKVLEALPKAGADIVEFGLPFTDPMADGPAIQAAGLRALKAGQDLRGTLALVRRFREGDDRTPVVLMGYYNPIHTYGVPHFLEDAQAAGIDGLIVVDLPPEEDEELCLPALEKGLAFIRLATPTTDEARLPAVLANTAGFVYYVSITGVTGTATPDFGRVSQAVSRITAHTNLPVVVGFGVKTGAHAAEIARGADGVVVGSALVDALARSLEPGDRAGSGTVEAVTSLVRELAQGVRSTAKAPAGA</sequence>
<protein>
    <recommendedName>
        <fullName evidence="1">Tryptophan synthase alpha chain</fullName>
        <ecNumber evidence="1">4.2.1.20</ecNumber>
    </recommendedName>
</protein>